<keyword id="KW-0963">Cytoplasm</keyword>
<keyword id="KW-0342">GTP-binding</keyword>
<keyword id="KW-0436">Ligase</keyword>
<keyword id="KW-0460">Magnesium</keyword>
<keyword id="KW-0479">Metal-binding</keyword>
<keyword id="KW-0547">Nucleotide-binding</keyword>
<keyword id="KW-0658">Purine biosynthesis</keyword>
<reference key="1">
    <citation type="journal article" date="2006" name="Proc. Natl. Acad. Sci. U.S.A.">
        <title>Comparative genomics of the lactic acid bacteria.</title>
        <authorList>
            <person name="Makarova K.S."/>
            <person name="Slesarev A."/>
            <person name="Wolf Y.I."/>
            <person name="Sorokin A."/>
            <person name="Mirkin B."/>
            <person name="Koonin E.V."/>
            <person name="Pavlov A."/>
            <person name="Pavlova N."/>
            <person name="Karamychev V."/>
            <person name="Polouchine N."/>
            <person name="Shakhova V."/>
            <person name="Grigoriev I."/>
            <person name="Lou Y."/>
            <person name="Rohksar D."/>
            <person name="Lucas S."/>
            <person name="Huang K."/>
            <person name="Goodstein D.M."/>
            <person name="Hawkins T."/>
            <person name="Plengvidhya V."/>
            <person name="Welker D."/>
            <person name="Hughes J."/>
            <person name="Goh Y."/>
            <person name="Benson A."/>
            <person name="Baldwin K."/>
            <person name="Lee J.-H."/>
            <person name="Diaz-Muniz I."/>
            <person name="Dosti B."/>
            <person name="Smeianov V."/>
            <person name="Wechter W."/>
            <person name="Barabote R."/>
            <person name="Lorca G."/>
            <person name="Altermann E."/>
            <person name="Barrangou R."/>
            <person name="Ganesan B."/>
            <person name="Xie Y."/>
            <person name="Rawsthorne H."/>
            <person name="Tamir D."/>
            <person name="Parker C."/>
            <person name="Breidt F."/>
            <person name="Broadbent J.R."/>
            <person name="Hutkins R."/>
            <person name="O'Sullivan D."/>
            <person name="Steele J."/>
            <person name="Unlu G."/>
            <person name="Saier M.H. Jr."/>
            <person name="Klaenhammer T."/>
            <person name="Richardson P."/>
            <person name="Kozyavkin S."/>
            <person name="Weimer B.C."/>
            <person name="Mills D.A."/>
        </authorList>
    </citation>
    <scope>NUCLEOTIDE SEQUENCE [LARGE SCALE GENOMIC DNA]</scope>
    <source>
        <strain>SK11</strain>
    </source>
</reference>
<evidence type="ECO:0000255" key="1">
    <source>
        <dbReference type="HAMAP-Rule" id="MF_00011"/>
    </source>
</evidence>
<gene>
    <name evidence="1" type="primary">purA</name>
    <name type="ordered locus">LACR_2207</name>
</gene>
<accession>Q02WK8</accession>
<feature type="chain" id="PRO_1000000846" description="Adenylosuccinate synthetase">
    <location>
        <begin position="1"/>
        <end position="430"/>
    </location>
</feature>
<feature type="active site" description="Proton acceptor" evidence="1">
    <location>
        <position position="13"/>
    </location>
</feature>
<feature type="active site" description="Proton donor" evidence="1">
    <location>
        <position position="41"/>
    </location>
</feature>
<feature type="binding site" evidence="1">
    <location>
        <begin position="12"/>
        <end position="18"/>
    </location>
    <ligand>
        <name>GTP</name>
        <dbReference type="ChEBI" id="CHEBI:37565"/>
    </ligand>
</feature>
<feature type="binding site" description="in other chain" evidence="1">
    <location>
        <begin position="13"/>
        <end position="16"/>
    </location>
    <ligand>
        <name>IMP</name>
        <dbReference type="ChEBI" id="CHEBI:58053"/>
        <note>ligand shared between dimeric partners</note>
    </ligand>
</feature>
<feature type="binding site" evidence="1">
    <location>
        <position position="13"/>
    </location>
    <ligand>
        <name>Mg(2+)</name>
        <dbReference type="ChEBI" id="CHEBI:18420"/>
    </ligand>
</feature>
<feature type="binding site" description="in other chain" evidence="1">
    <location>
        <begin position="38"/>
        <end position="41"/>
    </location>
    <ligand>
        <name>IMP</name>
        <dbReference type="ChEBI" id="CHEBI:58053"/>
        <note>ligand shared between dimeric partners</note>
    </ligand>
</feature>
<feature type="binding site" evidence="1">
    <location>
        <begin position="40"/>
        <end position="42"/>
    </location>
    <ligand>
        <name>GTP</name>
        <dbReference type="ChEBI" id="CHEBI:37565"/>
    </ligand>
</feature>
<feature type="binding site" evidence="1">
    <location>
        <position position="40"/>
    </location>
    <ligand>
        <name>Mg(2+)</name>
        <dbReference type="ChEBI" id="CHEBI:18420"/>
    </ligand>
</feature>
<feature type="binding site" description="in other chain" evidence="1">
    <location>
        <position position="128"/>
    </location>
    <ligand>
        <name>IMP</name>
        <dbReference type="ChEBI" id="CHEBI:58053"/>
        <note>ligand shared between dimeric partners</note>
    </ligand>
</feature>
<feature type="binding site" evidence="1">
    <location>
        <position position="142"/>
    </location>
    <ligand>
        <name>IMP</name>
        <dbReference type="ChEBI" id="CHEBI:58053"/>
        <note>ligand shared between dimeric partners</note>
    </ligand>
</feature>
<feature type="binding site" description="in other chain" evidence="1">
    <location>
        <position position="223"/>
    </location>
    <ligand>
        <name>IMP</name>
        <dbReference type="ChEBI" id="CHEBI:58053"/>
        <note>ligand shared between dimeric partners</note>
    </ligand>
</feature>
<feature type="binding site" description="in other chain" evidence="1">
    <location>
        <position position="238"/>
    </location>
    <ligand>
        <name>IMP</name>
        <dbReference type="ChEBI" id="CHEBI:58053"/>
        <note>ligand shared between dimeric partners</note>
    </ligand>
</feature>
<feature type="binding site" evidence="1">
    <location>
        <begin position="298"/>
        <end position="304"/>
    </location>
    <ligand>
        <name>substrate</name>
    </ligand>
</feature>
<feature type="binding site" description="in other chain" evidence="1">
    <location>
        <position position="302"/>
    </location>
    <ligand>
        <name>IMP</name>
        <dbReference type="ChEBI" id="CHEBI:58053"/>
        <note>ligand shared between dimeric partners</note>
    </ligand>
</feature>
<feature type="binding site" evidence="1">
    <location>
        <position position="304"/>
    </location>
    <ligand>
        <name>GTP</name>
        <dbReference type="ChEBI" id="CHEBI:37565"/>
    </ligand>
</feature>
<feature type="binding site" evidence="1">
    <location>
        <begin position="330"/>
        <end position="332"/>
    </location>
    <ligand>
        <name>GTP</name>
        <dbReference type="ChEBI" id="CHEBI:37565"/>
    </ligand>
</feature>
<feature type="binding site" evidence="1">
    <location>
        <begin position="413"/>
        <end position="415"/>
    </location>
    <ligand>
        <name>GTP</name>
        <dbReference type="ChEBI" id="CHEBI:37565"/>
    </ligand>
</feature>
<organism>
    <name type="scientific">Lactococcus lactis subsp. cremoris (strain SK11)</name>
    <dbReference type="NCBI Taxonomy" id="272622"/>
    <lineage>
        <taxon>Bacteria</taxon>
        <taxon>Bacillati</taxon>
        <taxon>Bacillota</taxon>
        <taxon>Bacilli</taxon>
        <taxon>Lactobacillales</taxon>
        <taxon>Streptococcaceae</taxon>
        <taxon>Lactococcus</taxon>
        <taxon>Lactococcus cremoris subsp. cremoris</taxon>
    </lineage>
</organism>
<comment type="function">
    <text evidence="1">Plays an important role in the de novo pathway of purine nucleotide biosynthesis. Catalyzes the first committed step in the biosynthesis of AMP from IMP.</text>
</comment>
<comment type="catalytic activity">
    <reaction evidence="1">
        <text>IMP + L-aspartate + GTP = N(6)-(1,2-dicarboxyethyl)-AMP + GDP + phosphate + 2 H(+)</text>
        <dbReference type="Rhea" id="RHEA:15753"/>
        <dbReference type="ChEBI" id="CHEBI:15378"/>
        <dbReference type="ChEBI" id="CHEBI:29991"/>
        <dbReference type="ChEBI" id="CHEBI:37565"/>
        <dbReference type="ChEBI" id="CHEBI:43474"/>
        <dbReference type="ChEBI" id="CHEBI:57567"/>
        <dbReference type="ChEBI" id="CHEBI:58053"/>
        <dbReference type="ChEBI" id="CHEBI:58189"/>
        <dbReference type="EC" id="6.3.4.4"/>
    </reaction>
</comment>
<comment type="cofactor">
    <cofactor evidence="1">
        <name>Mg(2+)</name>
        <dbReference type="ChEBI" id="CHEBI:18420"/>
    </cofactor>
    <text evidence="1">Binds 1 Mg(2+) ion per subunit.</text>
</comment>
<comment type="pathway">
    <text evidence="1">Purine metabolism; AMP biosynthesis via de novo pathway; AMP from IMP: step 1/2.</text>
</comment>
<comment type="subunit">
    <text evidence="1">Homodimer.</text>
</comment>
<comment type="subcellular location">
    <subcellularLocation>
        <location evidence="1">Cytoplasm</location>
    </subcellularLocation>
</comment>
<comment type="similarity">
    <text evidence="1">Belongs to the adenylosuccinate synthetase family.</text>
</comment>
<protein>
    <recommendedName>
        <fullName evidence="1">Adenylosuccinate synthetase</fullName>
        <shortName evidence="1">AMPSase</shortName>
        <shortName evidence="1">AdSS</shortName>
        <ecNumber evidence="1">6.3.4.4</ecNumber>
    </recommendedName>
    <alternativeName>
        <fullName evidence="1">IMP--aspartate ligase</fullName>
    </alternativeName>
</protein>
<dbReference type="EC" id="6.3.4.4" evidence="1"/>
<dbReference type="EMBL" id="CP000425">
    <property type="protein sequence ID" value="ABJ73664.1"/>
    <property type="molecule type" value="Genomic_DNA"/>
</dbReference>
<dbReference type="RefSeq" id="WP_011677000.1">
    <property type="nucleotide sequence ID" value="NC_008527.1"/>
</dbReference>
<dbReference type="SMR" id="Q02WK8"/>
<dbReference type="KEGG" id="llc:LACR_2207"/>
<dbReference type="HOGENOM" id="CLU_029848_0_0_9"/>
<dbReference type="UniPathway" id="UPA00075">
    <property type="reaction ID" value="UER00335"/>
</dbReference>
<dbReference type="Proteomes" id="UP000000240">
    <property type="component" value="Chromosome"/>
</dbReference>
<dbReference type="GO" id="GO:0005737">
    <property type="term" value="C:cytoplasm"/>
    <property type="evidence" value="ECO:0007669"/>
    <property type="project" value="UniProtKB-SubCell"/>
</dbReference>
<dbReference type="GO" id="GO:0004019">
    <property type="term" value="F:adenylosuccinate synthase activity"/>
    <property type="evidence" value="ECO:0007669"/>
    <property type="project" value="UniProtKB-UniRule"/>
</dbReference>
<dbReference type="GO" id="GO:0005525">
    <property type="term" value="F:GTP binding"/>
    <property type="evidence" value="ECO:0007669"/>
    <property type="project" value="UniProtKB-UniRule"/>
</dbReference>
<dbReference type="GO" id="GO:0000287">
    <property type="term" value="F:magnesium ion binding"/>
    <property type="evidence" value="ECO:0007669"/>
    <property type="project" value="UniProtKB-UniRule"/>
</dbReference>
<dbReference type="GO" id="GO:0044208">
    <property type="term" value="P:'de novo' AMP biosynthetic process"/>
    <property type="evidence" value="ECO:0007669"/>
    <property type="project" value="UniProtKB-UniRule"/>
</dbReference>
<dbReference type="GO" id="GO:0046040">
    <property type="term" value="P:IMP metabolic process"/>
    <property type="evidence" value="ECO:0007669"/>
    <property type="project" value="TreeGrafter"/>
</dbReference>
<dbReference type="CDD" id="cd03108">
    <property type="entry name" value="AdSS"/>
    <property type="match status" value="1"/>
</dbReference>
<dbReference type="FunFam" id="1.10.300.10:FF:000001">
    <property type="entry name" value="Adenylosuccinate synthetase"/>
    <property type="match status" value="1"/>
</dbReference>
<dbReference type="FunFam" id="3.90.170.10:FF:000001">
    <property type="entry name" value="Adenylosuccinate synthetase"/>
    <property type="match status" value="1"/>
</dbReference>
<dbReference type="Gene3D" id="3.40.440.10">
    <property type="entry name" value="Adenylosuccinate Synthetase, subunit A, domain 1"/>
    <property type="match status" value="1"/>
</dbReference>
<dbReference type="Gene3D" id="1.10.300.10">
    <property type="entry name" value="Adenylosuccinate Synthetase, subunit A, domain 2"/>
    <property type="match status" value="1"/>
</dbReference>
<dbReference type="Gene3D" id="3.90.170.10">
    <property type="entry name" value="Adenylosuccinate Synthetase, subunit A, domain 3"/>
    <property type="match status" value="1"/>
</dbReference>
<dbReference type="HAMAP" id="MF_00011">
    <property type="entry name" value="Adenylosucc_synth"/>
    <property type="match status" value="1"/>
</dbReference>
<dbReference type="InterPro" id="IPR018220">
    <property type="entry name" value="Adenylosuccin_syn_GTP-bd"/>
</dbReference>
<dbReference type="InterPro" id="IPR033128">
    <property type="entry name" value="Adenylosuccin_syn_Lys_AS"/>
</dbReference>
<dbReference type="InterPro" id="IPR042109">
    <property type="entry name" value="Adenylosuccinate_synth_dom1"/>
</dbReference>
<dbReference type="InterPro" id="IPR042110">
    <property type="entry name" value="Adenylosuccinate_synth_dom2"/>
</dbReference>
<dbReference type="InterPro" id="IPR042111">
    <property type="entry name" value="Adenylosuccinate_synth_dom3"/>
</dbReference>
<dbReference type="InterPro" id="IPR001114">
    <property type="entry name" value="Adenylosuccinate_synthetase"/>
</dbReference>
<dbReference type="InterPro" id="IPR027417">
    <property type="entry name" value="P-loop_NTPase"/>
</dbReference>
<dbReference type="NCBIfam" id="NF002223">
    <property type="entry name" value="PRK01117.1"/>
    <property type="match status" value="1"/>
</dbReference>
<dbReference type="NCBIfam" id="TIGR00184">
    <property type="entry name" value="purA"/>
    <property type="match status" value="1"/>
</dbReference>
<dbReference type="PANTHER" id="PTHR11846">
    <property type="entry name" value="ADENYLOSUCCINATE SYNTHETASE"/>
    <property type="match status" value="1"/>
</dbReference>
<dbReference type="PANTHER" id="PTHR11846:SF0">
    <property type="entry name" value="ADENYLOSUCCINATE SYNTHETASE"/>
    <property type="match status" value="1"/>
</dbReference>
<dbReference type="Pfam" id="PF00709">
    <property type="entry name" value="Adenylsucc_synt"/>
    <property type="match status" value="1"/>
</dbReference>
<dbReference type="SMART" id="SM00788">
    <property type="entry name" value="Adenylsucc_synt"/>
    <property type="match status" value="1"/>
</dbReference>
<dbReference type="SUPFAM" id="SSF52540">
    <property type="entry name" value="P-loop containing nucleoside triphosphate hydrolases"/>
    <property type="match status" value="1"/>
</dbReference>
<dbReference type="PROSITE" id="PS01266">
    <property type="entry name" value="ADENYLOSUCCIN_SYN_1"/>
    <property type="match status" value="1"/>
</dbReference>
<dbReference type="PROSITE" id="PS00513">
    <property type="entry name" value="ADENYLOSUCCIN_SYN_2"/>
    <property type="match status" value="1"/>
</dbReference>
<name>PURA_LACLS</name>
<sequence length="430" mass="47353">MPSVVVVGTQWGDEGKGKITDFLSSNAEVIARYQGGDNAGHTIVIDGKKFKLHLIPSGIFFPEKISVIGNGVVVNPKSLIEEIAYLAENGVSANSLRISDRAHVILPYHKKLDFLQEEAKGDKKIGTTIKGIGPAYMDKAARVGIRIADLLDKEIFEERLRTNLEVKNREFVKMYDSEPLEFEEIFEEYYEYGQQLKKYVTDTSVILNDALDAGKRVLFEGAQGVMLDIDQGTYPFVTSSNPVAGGVTIGSGVGPSKISKVVGVCKAYTSRVGDGPFPTELFDEVGHQIREVGHEYGTTTGRPRRVGWFDSVVMRHAKRVSGLTNLSLNSIDVLSGLETVKICVAYERSNGEQITHYPASLKELADCKPIYEELPGWSEDITSCRTLEELPEAARNYVRRVGELVGVRISTFSVGPGREQTNVLESVWGV</sequence>
<proteinExistence type="inferred from homology"/>